<keyword id="KW-0175">Coiled coil</keyword>
<keyword id="KW-1015">Disulfide bond</keyword>
<keyword id="KW-0325">Glycoprotein</keyword>
<keyword id="KW-1267">Proteomics identification</keyword>
<keyword id="KW-1185">Reference proteome</keyword>
<keyword id="KW-0964">Secreted</keyword>
<keyword id="KW-0732">Signal</keyword>
<evidence type="ECO:0000250" key="1"/>
<evidence type="ECO:0000255" key="2"/>
<evidence type="ECO:0000305" key="3"/>
<organism>
    <name type="scientific">Homo sapiens</name>
    <name type="common">Human</name>
    <dbReference type="NCBI Taxonomy" id="9606"/>
    <lineage>
        <taxon>Eukaryota</taxon>
        <taxon>Metazoa</taxon>
        <taxon>Chordata</taxon>
        <taxon>Craniata</taxon>
        <taxon>Vertebrata</taxon>
        <taxon>Euteleostomi</taxon>
        <taxon>Mammalia</taxon>
        <taxon>Eutheria</taxon>
        <taxon>Euarchontoglires</taxon>
        <taxon>Primates</taxon>
        <taxon>Haplorrhini</taxon>
        <taxon>Catarrhini</taxon>
        <taxon>Hominidae</taxon>
        <taxon>Homo</taxon>
    </lineage>
</organism>
<comment type="subcellular location">
    <subcellularLocation>
        <location evidence="3">Secreted</location>
    </subcellularLocation>
</comment>
<comment type="similarity">
    <text evidence="3">Belongs to the clusterin family.</text>
</comment>
<accession>Q15846</accession>
<accession>A0FDN7</accession>
<name>CLUL1_HUMAN</name>
<reference key="1">
    <citation type="journal article" date="2003" name="Invest. Ophthalmol. Vis. Sci.">
        <title>Comparative analysis and expression of CLUL1, a cone photoreceptor-specific gene.</title>
        <authorList>
            <person name="Zhang Q."/>
            <person name="Beltran W.A."/>
            <person name="Mao Z."/>
            <person name="Li K."/>
            <person name="Johnson J.L."/>
            <person name="Acland G.M."/>
            <person name="Aguirre G.D."/>
        </authorList>
    </citation>
    <scope>NUCLEOTIDE SEQUENCE [MRNA]</scope>
</reference>
<reference key="2">
    <citation type="submission" date="1995-08" db="EMBL/GenBank/DDBJ databases">
        <title>Expression profile of active genes in human retina.</title>
        <authorList>
            <person name="Shimizu A."/>
            <person name="Nishida K."/>
            <person name="Kinoshita S."/>
            <person name="Inazawa J."/>
            <person name="Okubo K."/>
            <person name="Matsubara K."/>
        </authorList>
    </citation>
    <scope>NUCLEOTIDE SEQUENCE [MRNA]</scope>
    <source>
        <tissue>Neuroretina</tissue>
    </source>
</reference>
<reference key="3">
    <citation type="journal article" date="2004" name="Genome Res.">
        <title>The status, quality, and expansion of the NIH full-length cDNA project: the Mammalian Gene Collection (MGC).</title>
        <authorList>
            <consortium name="The MGC Project Team"/>
        </authorList>
    </citation>
    <scope>NUCLEOTIDE SEQUENCE [LARGE SCALE MRNA]</scope>
    <source>
        <tissue>Brain</tissue>
    </source>
</reference>
<reference key="4">
    <citation type="journal article" date="2007" name="BMC Genomics">
        <title>Mapping of transcription start sites of human retina expressed genes.</title>
        <authorList>
            <person name="Roni V."/>
            <person name="Carpio R."/>
            <person name="Wissinger B."/>
        </authorList>
    </citation>
    <scope>NUCLEOTIDE SEQUENCE [LARGE SCALE MRNA] OF 1-17</scope>
    <source>
        <tissue>Retina</tissue>
    </source>
</reference>
<dbReference type="EMBL" id="AF395889">
    <property type="protein sequence ID" value="AAM73723.1"/>
    <property type="molecule type" value="mRNA"/>
</dbReference>
<dbReference type="EMBL" id="D63813">
    <property type="protein sequence ID" value="BAA09882.1"/>
    <property type="molecule type" value="mRNA"/>
</dbReference>
<dbReference type="EMBL" id="BC025381">
    <property type="protein sequence ID" value="AAH25381.1"/>
    <property type="molecule type" value="mRNA"/>
</dbReference>
<dbReference type="EMBL" id="DQ980621">
    <property type="protein sequence ID" value="ABJ97142.1"/>
    <property type="molecule type" value="mRNA"/>
</dbReference>
<dbReference type="CCDS" id="CCDS42405.1"/>
<dbReference type="RefSeq" id="NP_001275965.2">
    <property type="nucleotide sequence ID" value="NM_001289036.3"/>
</dbReference>
<dbReference type="RefSeq" id="NP_001305451.1">
    <property type="nucleotide sequence ID" value="NM_001318522.2"/>
</dbReference>
<dbReference type="RefSeq" id="NP_001362421.1">
    <property type="nucleotide sequence ID" value="NM_001375492.2"/>
</dbReference>
<dbReference type="RefSeq" id="NP_001380273.1">
    <property type="nucleotide sequence ID" value="NM_001393344.1"/>
</dbReference>
<dbReference type="RefSeq" id="NP_001380274.1">
    <property type="nucleotide sequence ID" value="NM_001393345.1"/>
</dbReference>
<dbReference type="RefSeq" id="NP_001380275.1">
    <property type="nucleotide sequence ID" value="NM_001393346.1"/>
</dbReference>
<dbReference type="RefSeq" id="NP_001380276.1">
    <property type="nucleotide sequence ID" value="NM_001393347.1"/>
</dbReference>
<dbReference type="RefSeq" id="NP_001380277.1">
    <property type="nucleotide sequence ID" value="NM_001393348.1"/>
</dbReference>
<dbReference type="RefSeq" id="NP_055225.1">
    <property type="nucleotide sequence ID" value="NM_014410.6"/>
</dbReference>
<dbReference type="RefSeq" id="NP_954636.1">
    <property type="nucleotide sequence ID" value="NM_199167.2"/>
</dbReference>
<dbReference type="RefSeq" id="XP_011523954.1">
    <property type="nucleotide sequence ID" value="XM_011525652.1"/>
</dbReference>
<dbReference type="RefSeq" id="XP_011523955.1">
    <property type="nucleotide sequence ID" value="XM_011525653.2"/>
</dbReference>
<dbReference type="RefSeq" id="XP_054174506.1">
    <property type="nucleotide sequence ID" value="XM_054318531.1"/>
</dbReference>
<dbReference type="SMR" id="Q15846"/>
<dbReference type="BioGRID" id="117999">
    <property type="interactions" value="1"/>
</dbReference>
<dbReference type="FunCoup" id="Q15846">
    <property type="interactions" value="49"/>
</dbReference>
<dbReference type="STRING" id="9606.ENSP00000441726"/>
<dbReference type="GlyCosmos" id="Q15846">
    <property type="glycosylation" value="6 sites, No reported glycans"/>
</dbReference>
<dbReference type="GlyGen" id="Q15846">
    <property type="glycosylation" value="6 sites, 2 N-linked glycans (2 sites)"/>
</dbReference>
<dbReference type="iPTMnet" id="Q15846"/>
<dbReference type="PhosphoSitePlus" id="Q15846"/>
<dbReference type="BioMuta" id="CLUL1"/>
<dbReference type="DMDM" id="78099959"/>
<dbReference type="MassIVE" id="Q15846"/>
<dbReference type="PaxDb" id="9606-ENSP00000441726"/>
<dbReference type="PeptideAtlas" id="Q15846"/>
<dbReference type="ProteomicsDB" id="60789"/>
<dbReference type="Antibodypedia" id="21905">
    <property type="antibodies" value="95 antibodies from 20 providers"/>
</dbReference>
<dbReference type="DNASU" id="27098"/>
<dbReference type="Ensembl" id="ENST00000338387.11">
    <property type="protein sequence ID" value="ENSP00000341128.6"/>
    <property type="gene ID" value="ENSG00000079101.18"/>
</dbReference>
<dbReference type="Ensembl" id="ENST00000400606.6">
    <property type="protein sequence ID" value="ENSP00000383449.2"/>
    <property type="gene ID" value="ENSG00000079101.18"/>
</dbReference>
<dbReference type="Ensembl" id="ENST00000540035.5">
    <property type="protein sequence ID" value="ENSP00000441726.2"/>
    <property type="gene ID" value="ENSG00000079101.18"/>
</dbReference>
<dbReference type="Ensembl" id="ENST00000579494.1">
    <property type="protein sequence ID" value="ENSP00000464642.1"/>
    <property type="gene ID" value="ENSG00000079101.18"/>
</dbReference>
<dbReference type="Ensembl" id="ENST00000581619.5">
    <property type="protein sequence ID" value="ENSP00000463269.2"/>
    <property type="gene ID" value="ENSG00000079101.18"/>
</dbReference>
<dbReference type="Ensembl" id="ENST00000692774.1">
    <property type="protein sequence ID" value="ENSP00000510271.1"/>
    <property type="gene ID" value="ENSG00000079101.18"/>
</dbReference>
<dbReference type="GeneID" id="27098"/>
<dbReference type="KEGG" id="hsa:27098"/>
<dbReference type="MANE-Select" id="ENST00000692774.1">
    <property type="protein sequence ID" value="ENSP00000510271.1"/>
    <property type="RefSeq nucleotide sequence ID" value="NM_001393344.1"/>
    <property type="RefSeq protein sequence ID" value="NP_001380273.1"/>
</dbReference>
<dbReference type="UCSC" id="uc002kkp.4">
    <property type="organism name" value="human"/>
</dbReference>
<dbReference type="AGR" id="HGNC:2096"/>
<dbReference type="CTD" id="27098"/>
<dbReference type="DisGeNET" id="27098"/>
<dbReference type="GeneCards" id="CLUL1"/>
<dbReference type="HGNC" id="HGNC:2096">
    <property type="gene designation" value="CLUL1"/>
</dbReference>
<dbReference type="HPA" id="ENSG00000079101">
    <property type="expression patterns" value="Tissue enriched (retina)"/>
</dbReference>
<dbReference type="MIM" id="616990">
    <property type="type" value="gene"/>
</dbReference>
<dbReference type="neXtProt" id="NX_Q15846"/>
<dbReference type="OpenTargets" id="ENSG00000079101"/>
<dbReference type="PharmGKB" id="PA26621"/>
<dbReference type="VEuPathDB" id="HostDB:ENSG00000079101"/>
<dbReference type="eggNOG" id="ENOG502QQ44">
    <property type="taxonomic scope" value="Eukaryota"/>
</dbReference>
<dbReference type="GeneTree" id="ENSGT00530000063668"/>
<dbReference type="HOGENOM" id="CLU_042162_0_0_1"/>
<dbReference type="InParanoid" id="Q15846"/>
<dbReference type="OrthoDB" id="9894485at2759"/>
<dbReference type="PAN-GO" id="Q15846">
    <property type="GO annotations" value="3 GO annotations based on evolutionary models"/>
</dbReference>
<dbReference type="PhylomeDB" id="Q15846"/>
<dbReference type="TreeFam" id="TF333030"/>
<dbReference type="PathwayCommons" id="Q15846"/>
<dbReference type="BioGRID-ORCS" id="27098">
    <property type="hits" value="17 hits in 1141 CRISPR screens"/>
</dbReference>
<dbReference type="ChiTaRS" id="CLUL1">
    <property type="organism name" value="human"/>
</dbReference>
<dbReference type="GenomeRNAi" id="27098"/>
<dbReference type="Pharos" id="Q15846">
    <property type="development level" value="Tdark"/>
</dbReference>
<dbReference type="PRO" id="PR:Q15846"/>
<dbReference type="Proteomes" id="UP000005640">
    <property type="component" value="Chromosome 18"/>
</dbReference>
<dbReference type="RNAct" id="Q15846">
    <property type="molecule type" value="protein"/>
</dbReference>
<dbReference type="Bgee" id="ENSG00000079101">
    <property type="expression patterns" value="Expressed in pigmented layer of retina and 124 other cell types or tissues"/>
</dbReference>
<dbReference type="ExpressionAtlas" id="Q15846">
    <property type="expression patterns" value="baseline and differential"/>
</dbReference>
<dbReference type="GO" id="GO:0005615">
    <property type="term" value="C:extracellular space"/>
    <property type="evidence" value="ECO:0000318"/>
    <property type="project" value="GO_Central"/>
</dbReference>
<dbReference type="GO" id="GO:0005634">
    <property type="term" value="C:nucleus"/>
    <property type="evidence" value="ECO:0000318"/>
    <property type="project" value="GO_Central"/>
</dbReference>
<dbReference type="GO" id="GO:0051787">
    <property type="term" value="F:misfolded protein binding"/>
    <property type="evidence" value="ECO:0000318"/>
    <property type="project" value="GO_Central"/>
</dbReference>
<dbReference type="InterPro" id="IPR000753">
    <property type="entry name" value="Clusterin-like"/>
</dbReference>
<dbReference type="InterPro" id="IPR016015">
    <property type="entry name" value="Clusterin_C"/>
</dbReference>
<dbReference type="InterPro" id="IPR016014">
    <property type="entry name" value="Clusterin_N"/>
</dbReference>
<dbReference type="PANTHER" id="PTHR10970">
    <property type="entry name" value="CLUSTERIN"/>
    <property type="match status" value="1"/>
</dbReference>
<dbReference type="PANTHER" id="PTHR10970:SF2">
    <property type="entry name" value="CLUSTERIN-LIKE PROTEIN 1"/>
    <property type="match status" value="1"/>
</dbReference>
<dbReference type="Pfam" id="PF01093">
    <property type="entry name" value="Clusterin"/>
    <property type="match status" value="1"/>
</dbReference>
<dbReference type="SMART" id="SM00035">
    <property type="entry name" value="CLa"/>
    <property type="match status" value="1"/>
</dbReference>
<dbReference type="SMART" id="SM00030">
    <property type="entry name" value="CLb"/>
    <property type="match status" value="1"/>
</dbReference>
<sequence>MKPPLLVFIVCLLWLKDSHCAPTWKDKTAISENLKSFSEVGEIDADEEVKKALTGIKQMKIMMERKEKEHTNLMSTLKKCREEKQEALKLLNEVQEHLEEEERLCRESLADSWGECRSCLENNCMRIYTTCQPSWSSVKNKIERFFRKIYQFLFPFHEDNEKDLPISEKLIEEDAQLTQMEDVFSQLTVDVNSLFNRSFNVFRQMQQEFDQTFQSHFISDTDLTEPYFFPAFSKEPMTKADLEQCWDIPNFFQLFCNFSVSIYESVSETITKMLKAIEDLPKQDKAPDHGGLISKMLPGQDRGLCGELDQNLSRCFKFHEKCQKCQAHLSEDCPDVPALHTELDEAIRLVNVSNQQYGQILQMTRKHLEDTAYLVEKMRGQFGWVSELANQAPETEIIFNSIQVVPRIHEGNISKQDETMMTDLSILPSSNFTLKIPLEESAESSNFIGYVVAKALQHFKEHFKTW</sequence>
<feature type="signal peptide" evidence="2">
    <location>
        <begin position="1"/>
        <end position="20"/>
    </location>
</feature>
<feature type="chain" id="PRO_0000005552" description="Clusterin-like protein 1">
    <location>
        <begin position="21"/>
        <end position="466"/>
    </location>
</feature>
<feature type="coiled-coil region" evidence="2">
    <location>
        <begin position="57"/>
        <end position="111"/>
    </location>
</feature>
<feature type="glycosylation site" description="N-linked (GlcNAc...) asparagine" evidence="2">
    <location>
        <position position="196"/>
    </location>
</feature>
<feature type="glycosylation site" description="N-linked (GlcNAc...) asparagine" evidence="2">
    <location>
        <position position="257"/>
    </location>
</feature>
<feature type="glycosylation site" description="N-linked (GlcNAc...) asparagine" evidence="2">
    <location>
        <position position="311"/>
    </location>
</feature>
<feature type="glycosylation site" description="N-linked (GlcNAc...) asparagine" evidence="2">
    <location>
        <position position="351"/>
    </location>
</feature>
<feature type="glycosylation site" description="N-linked (GlcNAc...) asparagine" evidence="2">
    <location>
        <position position="412"/>
    </location>
</feature>
<feature type="glycosylation site" description="N-linked (GlcNAc...) asparagine" evidence="2">
    <location>
        <position position="431"/>
    </location>
</feature>
<feature type="disulfide bond" evidence="1">
    <location>
        <begin position="105"/>
        <end position="333"/>
    </location>
</feature>
<feature type="disulfide bond" evidence="1">
    <location>
        <begin position="116"/>
        <end position="325"/>
    </location>
</feature>
<feature type="disulfide bond" evidence="1">
    <location>
        <begin position="119"/>
        <end position="322"/>
    </location>
</feature>
<feature type="disulfide bond" evidence="1">
    <location>
        <begin position="124"/>
        <end position="315"/>
    </location>
</feature>
<feature type="disulfide bond" evidence="1">
    <location>
        <begin position="131"/>
        <end position="305"/>
    </location>
</feature>
<protein>
    <recommendedName>
        <fullName>Clusterin-like protein 1</fullName>
    </recommendedName>
    <alternativeName>
        <fullName>Retinal-specific clusterin-like protein</fullName>
    </alternativeName>
</protein>
<proteinExistence type="evidence at protein level"/>
<gene>
    <name type="primary">CLUL1</name>
</gene>